<comment type="induction">
    <text evidence="1">By phosphate starvation, via the PhoP/PhoR two-component regulatory system.</text>
</comment>
<comment type="sequence caution" evidence="2">
    <conflict type="frameshift">
        <sequence resource="EMBL-CDS" id="CAA74455"/>
    </conflict>
</comment>
<dbReference type="EMBL" id="Y14080">
    <property type="protein sequence ID" value="CAA74455.1"/>
    <property type="status" value="ALT_FRAME"/>
    <property type="molecule type" value="Genomic_DNA"/>
</dbReference>
<dbReference type="EMBL" id="AL009126">
    <property type="protein sequence ID" value="CAB12822.2"/>
    <property type="molecule type" value="Genomic_DNA"/>
</dbReference>
<dbReference type="PIR" id="B69820">
    <property type="entry name" value="B69820"/>
</dbReference>
<dbReference type="RefSeq" id="NP_388864.2">
    <property type="nucleotide sequence ID" value="NC_000964.3"/>
</dbReference>
<dbReference type="RefSeq" id="WP_003233277.1">
    <property type="nucleotide sequence ID" value="NZ_OZ025638.1"/>
</dbReference>
<dbReference type="PDB" id="3DNP">
    <property type="method" value="X-ray"/>
    <property type="resolution" value="1.85 A"/>
    <property type="chains" value="A=1-287"/>
</dbReference>
<dbReference type="PDBsum" id="3DNP"/>
<dbReference type="SMR" id="O07539"/>
<dbReference type="FunCoup" id="O07539">
    <property type="interactions" value="20"/>
</dbReference>
<dbReference type="STRING" id="224308.BSU09830"/>
<dbReference type="PaxDb" id="224308-BSU09830"/>
<dbReference type="DNASU" id="939288"/>
<dbReference type="EnsemblBacteria" id="CAB12822">
    <property type="protein sequence ID" value="CAB12822"/>
    <property type="gene ID" value="BSU_09830"/>
</dbReference>
<dbReference type="GeneID" id="939288"/>
<dbReference type="KEGG" id="bsu:BSU09830"/>
<dbReference type="PATRIC" id="fig|224308.179.peg.1055"/>
<dbReference type="eggNOG" id="COG0561">
    <property type="taxonomic scope" value="Bacteria"/>
</dbReference>
<dbReference type="InParanoid" id="O07539"/>
<dbReference type="OrthoDB" id="9790031at2"/>
<dbReference type="PhylomeDB" id="O07539"/>
<dbReference type="BioCyc" id="BSUB:BSU09830-MONOMER"/>
<dbReference type="EvolutionaryTrace" id="O07539"/>
<dbReference type="Proteomes" id="UP000001570">
    <property type="component" value="Chromosome"/>
</dbReference>
<dbReference type="GO" id="GO:0005829">
    <property type="term" value="C:cytosol"/>
    <property type="evidence" value="ECO:0000318"/>
    <property type="project" value="GO_Central"/>
</dbReference>
<dbReference type="GO" id="GO:0000287">
    <property type="term" value="F:magnesium ion binding"/>
    <property type="evidence" value="ECO:0000318"/>
    <property type="project" value="GO_Central"/>
</dbReference>
<dbReference type="GO" id="GO:0016791">
    <property type="term" value="F:phosphatase activity"/>
    <property type="evidence" value="ECO:0000318"/>
    <property type="project" value="GO_Central"/>
</dbReference>
<dbReference type="CDD" id="cd07516">
    <property type="entry name" value="HAD_Pase"/>
    <property type="match status" value="1"/>
</dbReference>
<dbReference type="Gene3D" id="3.30.1240.10">
    <property type="match status" value="1"/>
</dbReference>
<dbReference type="Gene3D" id="3.40.50.1000">
    <property type="entry name" value="HAD superfamily/HAD-like"/>
    <property type="match status" value="1"/>
</dbReference>
<dbReference type="InterPro" id="IPR000150">
    <property type="entry name" value="Cof"/>
</dbReference>
<dbReference type="InterPro" id="IPR036412">
    <property type="entry name" value="HAD-like_sf"/>
</dbReference>
<dbReference type="InterPro" id="IPR006379">
    <property type="entry name" value="HAD-SF_hydro_IIB"/>
</dbReference>
<dbReference type="InterPro" id="IPR023214">
    <property type="entry name" value="HAD_sf"/>
</dbReference>
<dbReference type="NCBIfam" id="TIGR00099">
    <property type="entry name" value="Cof-subfamily"/>
    <property type="match status" value="1"/>
</dbReference>
<dbReference type="NCBIfam" id="TIGR01484">
    <property type="entry name" value="HAD-SF-IIB"/>
    <property type="match status" value="1"/>
</dbReference>
<dbReference type="PANTHER" id="PTHR10000">
    <property type="entry name" value="PHOSPHOSERINE PHOSPHATASE"/>
    <property type="match status" value="1"/>
</dbReference>
<dbReference type="PANTHER" id="PTHR10000:SF50">
    <property type="entry name" value="STRESS RESPONSE PROTEIN YHAX"/>
    <property type="match status" value="1"/>
</dbReference>
<dbReference type="Pfam" id="PF08282">
    <property type="entry name" value="Hydrolase_3"/>
    <property type="match status" value="1"/>
</dbReference>
<dbReference type="SUPFAM" id="SSF56784">
    <property type="entry name" value="HAD-like"/>
    <property type="match status" value="1"/>
</dbReference>
<proteinExistence type="evidence at protein level"/>
<gene>
    <name type="primary">yhaX</name>
    <name type="ordered locus">BSU09830</name>
</gene>
<name>YHAX_BACSU</name>
<accession>O07539</accession>
<sequence length="288" mass="32408">MSKQLLALNIDGALLRSNGKIHQATKDAIEYVKKKGIYVTLVTNRHFRSAQKIAKSLKLDAKLITHSGAYIAEKIDAPFFEKRISDDHTFNIVQVLESYQCNIRLLHEKYSIGNKKKVNSNLLGKALIHPSDPIFYPVQFVESLSDLLMDEPVSAPVIEVYTEHDIQHDITETITKAFPAVDVIRVNDEKLNIVPKGVSKEAGLALVASELGLSMDDVVAIGHQYDDLPMIELAGLGVAMGNAVPEIKRKADWVTRSNDEQGVAYMMKEYFRMQQRKGFLDKFHMKRV</sequence>
<protein>
    <recommendedName>
        <fullName>Stress response protein YhaX</fullName>
    </recommendedName>
</protein>
<organism>
    <name type="scientific">Bacillus subtilis (strain 168)</name>
    <dbReference type="NCBI Taxonomy" id="224308"/>
    <lineage>
        <taxon>Bacteria</taxon>
        <taxon>Bacillati</taxon>
        <taxon>Bacillota</taxon>
        <taxon>Bacilli</taxon>
        <taxon>Bacillales</taxon>
        <taxon>Bacillaceae</taxon>
        <taxon>Bacillus</taxon>
    </lineage>
</organism>
<feature type="chain" id="PRO_0000049552" description="Stress response protein YhaX">
    <location>
        <begin position="1"/>
        <end position="288"/>
    </location>
</feature>
<feature type="strand" evidence="3">
    <location>
        <begin position="5"/>
        <end position="8"/>
    </location>
</feature>
<feature type="helix" evidence="3">
    <location>
        <begin position="10"/>
        <end position="14"/>
    </location>
</feature>
<feature type="helix" evidence="3">
    <location>
        <begin position="23"/>
        <end position="34"/>
    </location>
</feature>
<feature type="strand" evidence="3">
    <location>
        <begin position="38"/>
        <end position="42"/>
    </location>
</feature>
<feature type="helix" evidence="3">
    <location>
        <begin position="47"/>
        <end position="56"/>
    </location>
</feature>
<feature type="strand" evidence="3">
    <location>
        <begin position="63"/>
        <end position="65"/>
    </location>
</feature>
<feature type="helix" evidence="3">
    <location>
        <begin position="66"/>
        <end position="68"/>
    </location>
</feature>
<feature type="strand" evidence="3">
    <location>
        <begin position="70"/>
        <end position="74"/>
    </location>
</feature>
<feature type="strand" evidence="3">
    <location>
        <begin position="79"/>
        <end position="81"/>
    </location>
</feature>
<feature type="helix" evidence="3">
    <location>
        <begin position="86"/>
        <end position="97"/>
    </location>
</feature>
<feature type="strand" evidence="3">
    <location>
        <begin position="102"/>
        <end position="106"/>
    </location>
</feature>
<feature type="strand" evidence="3">
    <location>
        <begin position="111"/>
        <end position="113"/>
    </location>
</feature>
<feature type="helix" evidence="3">
    <location>
        <begin position="121"/>
        <end position="125"/>
    </location>
</feature>
<feature type="turn" evidence="3">
    <location>
        <begin position="133"/>
        <end position="135"/>
    </location>
</feature>
<feature type="strand" evidence="3">
    <location>
        <begin position="138"/>
        <end position="140"/>
    </location>
</feature>
<feature type="helix" evidence="3">
    <location>
        <begin position="144"/>
        <end position="150"/>
    </location>
</feature>
<feature type="strand" evidence="3">
    <location>
        <begin position="156"/>
        <end position="161"/>
    </location>
</feature>
<feature type="helix" evidence="3">
    <location>
        <begin position="164"/>
        <end position="166"/>
    </location>
</feature>
<feature type="helix" evidence="3">
    <location>
        <begin position="167"/>
        <end position="177"/>
    </location>
</feature>
<feature type="strand" evidence="3">
    <location>
        <begin position="181"/>
        <end position="187"/>
    </location>
</feature>
<feature type="strand" evidence="3">
    <location>
        <begin position="190"/>
        <end position="195"/>
    </location>
</feature>
<feature type="helix" evidence="3">
    <location>
        <begin position="200"/>
        <end position="210"/>
    </location>
</feature>
<feature type="helix" evidence="3">
    <location>
        <begin position="215"/>
        <end position="217"/>
    </location>
</feature>
<feature type="strand" evidence="3">
    <location>
        <begin position="218"/>
        <end position="222"/>
    </location>
</feature>
<feature type="helix" evidence="3">
    <location>
        <begin position="225"/>
        <end position="227"/>
    </location>
</feature>
<feature type="helix" evidence="3">
    <location>
        <begin position="228"/>
        <end position="233"/>
    </location>
</feature>
<feature type="strand" evidence="3">
    <location>
        <begin position="234"/>
        <end position="239"/>
    </location>
</feature>
<feature type="helix" evidence="3">
    <location>
        <begin position="245"/>
        <end position="250"/>
    </location>
</feature>
<feature type="strand" evidence="3">
    <location>
        <begin position="251"/>
        <end position="254"/>
    </location>
</feature>
<feature type="turn" evidence="3">
    <location>
        <begin position="258"/>
        <end position="261"/>
    </location>
</feature>
<feature type="helix" evidence="3">
    <location>
        <begin position="262"/>
        <end position="276"/>
    </location>
</feature>
<evidence type="ECO:0000269" key="1">
    <source>
    </source>
</evidence>
<evidence type="ECO:0000305" key="2"/>
<evidence type="ECO:0007829" key="3">
    <source>
        <dbReference type="PDB" id="3DNP"/>
    </source>
</evidence>
<keyword id="KW-0002">3D-structure</keyword>
<keyword id="KW-1185">Reference proteome</keyword>
<keyword id="KW-0346">Stress response</keyword>
<reference key="1">
    <citation type="journal article" date="1998" name="Microbiology">
        <title>The 172 kb prkA-addAB region from 83 degrees to 97 degrees of the Bacillus subtilis chromosome contains several dysfunctional genes, the glyB marker, many genes encoding transporter proteins, and the ubiquitous hit gene.</title>
        <authorList>
            <person name="Noback M.A."/>
            <person name="Holsappel S."/>
            <person name="Kiewiet R."/>
            <person name="Terpstra P."/>
            <person name="Wambutt R."/>
            <person name="Wedler H."/>
            <person name="Venema G."/>
            <person name="Bron S."/>
        </authorList>
    </citation>
    <scope>NUCLEOTIDE SEQUENCE [GENOMIC DNA]</scope>
    <source>
        <strain>168</strain>
    </source>
</reference>
<reference key="2">
    <citation type="journal article" date="1997" name="Nature">
        <title>The complete genome sequence of the Gram-positive bacterium Bacillus subtilis.</title>
        <authorList>
            <person name="Kunst F."/>
            <person name="Ogasawara N."/>
            <person name="Moszer I."/>
            <person name="Albertini A.M."/>
            <person name="Alloni G."/>
            <person name="Azevedo V."/>
            <person name="Bertero M.G."/>
            <person name="Bessieres P."/>
            <person name="Bolotin A."/>
            <person name="Borchert S."/>
            <person name="Borriss R."/>
            <person name="Boursier L."/>
            <person name="Brans A."/>
            <person name="Braun M."/>
            <person name="Brignell S.C."/>
            <person name="Bron S."/>
            <person name="Brouillet S."/>
            <person name="Bruschi C.V."/>
            <person name="Caldwell B."/>
            <person name="Capuano V."/>
            <person name="Carter N.M."/>
            <person name="Choi S.-K."/>
            <person name="Codani J.-J."/>
            <person name="Connerton I.F."/>
            <person name="Cummings N.J."/>
            <person name="Daniel R.A."/>
            <person name="Denizot F."/>
            <person name="Devine K.M."/>
            <person name="Duesterhoeft A."/>
            <person name="Ehrlich S.D."/>
            <person name="Emmerson P.T."/>
            <person name="Entian K.-D."/>
            <person name="Errington J."/>
            <person name="Fabret C."/>
            <person name="Ferrari E."/>
            <person name="Foulger D."/>
            <person name="Fritz C."/>
            <person name="Fujita M."/>
            <person name="Fujita Y."/>
            <person name="Fuma S."/>
            <person name="Galizzi A."/>
            <person name="Galleron N."/>
            <person name="Ghim S.-Y."/>
            <person name="Glaser P."/>
            <person name="Goffeau A."/>
            <person name="Golightly E.J."/>
            <person name="Grandi G."/>
            <person name="Guiseppi G."/>
            <person name="Guy B.J."/>
            <person name="Haga K."/>
            <person name="Haiech J."/>
            <person name="Harwood C.R."/>
            <person name="Henaut A."/>
            <person name="Hilbert H."/>
            <person name="Holsappel S."/>
            <person name="Hosono S."/>
            <person name="Hullo M.-F."/>
            <person name="Itaya M."/>
            <person name="Jones L.-M."/>
            <person name="Joris B."/>
            <person name="Karamata D."/>
            <person name="Kasahara Y."/>
            <person name="Klaerr-Blanchard M."/>
            <person name="Klein C."/>
            <person name="Kobayashi Y."/>
            <person name="Koetter P."/>
            <person name="Koningstein G."/>
            <person name="Krogh S."/>
            <person name="Kumano M."/>
            <person name="Kurita K."/>
            <person name="Lapidus A."/>
            <person name="Lardinois S."/>
            <person name="Lauber J."/>
            <person name="Lazarevic V."/>
            <person name="Lee S.-M."/>
            <person name="Levine A."/>
            <person name="Liu H."/>
            <person name="Masuda S."/>
            <person name="Mauel C."/>
            <person name="Medigue C."/>
            <person name="Medina N."/>
            <person name="Mellado R.P."/>
            <person name="Mizuno M."/>
            <person name="Moestl D."/>
            <person name="Nakai S."/>
            <person name="Noback M."/>
            <person name="Noone D."/>
            <person name="O'Reilly M."/>
            <person name="Ogawa K."/>
            <person name="Ogiwara A."/>
            <person name="Oudega B."/>
            <person name="Park S.-H."/>
            <person name="Parro V."/>
            <person name="Pohl T.M."/>
            <person name="Portetelle D."/>
            <person name="Porwollik S."/>
            <person name="Prescott A.M."/>
            <person name="Presecan E."/>
            <person name="Pujic P."/>
            <person name="Purnelle B."/>
            <person name="Rapoport G."/>
            <person name="Rey M."/>
            <person name="Reynolds S."/>
            <person name="Rieger M."/>
            <person name="Rivolta C."/>
            <person name="Rocha E."/>
            <person name="Roche B."/>
            <person name="Rose M."/>
            <person name="Sadaie Y."/>
            <person name="Sato T."/>
            <person name="Scanlan E."/>
            <person name="Schleich S."/>
            <person name="Schroeter R."/>
            <person name="Scoffone F."/>
            <person name="Sekiguchi J."/>
            <person name="Sekowska A."/>
            <person name="Seror S.J."/>
            <person name="Serror P."/>
            <person name="Shin B.-S."/>
            <person name="Soldo B."/>
            <person name="Sorokin A."/>
            <person name="Tacconi E."/>
            <person name="Takagi T."/>
            <person name="Takahashi H."/>
            <person name="Takemaru K."/>
            <person name="Takeuchi M."/>
            <person name="Tamakoshi A."/>
            <person name="Tanaka T."/>
            <person name="Terpstra P."/>
            <person name="Tognoni A."/>
            <person name="Tosato V."/>
            <person name="Uchiyama S."/>
            <person name="Vandenbol M."/>
            <person name="Vannier F."/>
            <person name="Vassarotti A."/>
            <person name="Viari A."/>
            <person name="Wambutt R."/>
            <person name="Wedler E."/>
            <person name="Wedler H."/>
            <person name="Weitzenegger T."/>
            <person name="Winters P."/>
            <person name="Wipat A."/>
            <person name="Yamamoto H."/>
            <person name="Yamane K."/>
            <person name="Yasumoto K."/>
            <person name="Yata K."/>
            <person name="Yoshida K."/>
            <person name="Yoshikawa H.-F."/>
            <person name="Zumstein E."/>
            <person name="Yoshikawa H."/>
            <person name="Danchin A."/>
        </authorList>
    </citation>
    <scope>NUCLEOTIDE SEQUENCE [LARGE SCALE GENOMIC DNA]</scope>
    <source>
        <strain>168</strain>
    </source>
</reference>
<reference key="3">
    <citation type="journal article" date="1999" name="Genome Res.">
        <title>Detecting and analyzing DNA sequencing errors: toward a higher quality of the Bacillus subtilis genome sequence.</title>
        <authorList>
            <person name="Medigue C."/>
            <person name="Rose M."/>
            <person name="Viari A."/>
            <person name="Danchin A."/>
        </authorList>
    </citation>
    <scope>SEQUENCE REVISION</scope>
</reference>
<reference key="4">
    <citation type="journal article" date="2002" name="Microbiology">
        <title>Regulatory interactions between the Pho and sigma(B)-dependent general stress regulons of Bacillus subtilis.</title>
        <authorList>
            <person name="Pragai Z."/>
            <person name="Harwood C.R."/>
        </authorList>
    </citation>
    <scope>TRANSCRIPTIONAL REGULATION</scope>
</reference>
<reference key="5">
    <citation type="submission" date="2008-07" db="PDB data bank">
        <title>Crystal structure of stress response protein yhaX from Bacillus subtilis.</title>
        <authorList>
            <consortium name="Midwest center for structural genomics (MCSG)"/>
        </authorList>
    </citation>
    <scope>X-RAY CRYSTALLOGRAPHY (1.85 ANGSTROMS)</scope>
</reference>